<reference key="1">
    <citation type="journal article" date="2009" name="J. Bacteriol.">
        <title>Genomic sequencing reveals regulatory mutations and recombinational events in the widely used MC4100 lineage of Escherichia coli K-12.</title>
        <authorList>
            <person name="Ferenci T."/>
            <person name="Zhou Z."/>
            <person name="Betteridge T."/>
            <person name="Ren Y."/>
            <person name="Liu Y."/>
            <person name="Feng L."/>
            <person name="Reeves P.R."/>
            <person name="Wang L."/>
        </authorList>
    </citation>
    <scope>NUCLEOTIDE SEQUENCE [LARGE SCALE GENOMIC DNA]</scope>
    <source>
        <strain>K12 / MC4100 / BW2952</strain>
    </source>
</reference>
<sequence length="183" mass="19859">MTATAQQLEYLKNSIKSIQDYPKPGILFRDVTSLLEDPKAYALSIDLLVERYKNAGITKVVGTEARGFLFGAPVALGLGVGFVPVRKPGKLPRETISETYDLEYGTDQLEIHVDAIKPGDKVLVVDDLLATGGTIEATVKLIRRLGGEVADAAFIINLFDLGGEQRLEKQGITSYSLVPFPGH</sequence>
<evidence type="ECO:0000255" key="1">
    <source>
        <dbReference type="HAMAP-Rule" id="MF_00004"/>
    </source>
</evidence>
<feature type="chain" id="PRO_1000201661" description="Adenine phosphoribosyltransferase">
    <location>
        <begin position="1"/>
        <end position="183"/>
    </location>
</feature>
<keyword id="KW-0963">Cytoplasm</keyword>
<keyword id="KW-0328">Glycosyltransferase</keyword>
<keyword id="KW-0660">Purine salvage</keyword>
<keyword id="KW-0808">Transferase</keyword>
<accession>C4ZUS3</accession>
<dbReference type="EC" id="2.4.2.7" evidence="1"/>
<dbReference type="EMBL" id="CP001396">
    <property type="protein sequence ID" value="ACR61928.1"/>
    <property type="molecule type" value="Genomic_DNA"/>
</dbReference>
<dbReference type="RefSeq" id="WP_000127356.1">
    <property type="nucleotide sequence ID" value="NC_012759.1"/>
</dbReference>
<dbReference type="SMR" id="C4ZUS3"/>
<dbReference type="GeneID" id="93776981"/>
<dbReference type="KEGG" id="ebw:BWG_0350"/>
<dbReference type="HOGENOM" id="CLU_063339_3_0_6"/>
<dbReference type="UniPathway" id="UPA00588">
    <property type="reaction ID" value="UER00646"/>
</dbReference>
<dbReference type="GO" id="GO:0005737">
    <property type="term" value="C:cytoplasm"/>
    <property type="evidence" value="ECO:0007669"/>
    <property type="project" value="UniProtKB-SubCell"/>
</dbReference>
<dbReference type="GO" id="GO:0002055">
    <property type="term" value="F:adenine binding"/>
    <property type="evidence" value="ECO:0007669"/>
    <property type="project" value="TreeGrafter"/>
</dbReference>
<dbReference type="GO" id="GO:0003999">
    <property type="term" value="F:adenine phosphoribosyltransferase activity"/>
    <property type="evidence" value="ECO:0007669"/>
    <property type="project" value="UniProtKB-UniRule"/>
</dbReference>
<dbReference type="GO" id="GO:0016208">
    <property type="term" value="F:AMP binding"/>
    <property type="evidence" value="ECO:0007669"/>
    <property type="project" value="TreeGrafter"/>
</dbReference>
<dbReference type="GO" id="GO:0006168">
    <property type="term" value="P:adenine salvage"/>
    <property type="evidence" value="ECO:0007669"/>
    <property type="project" value="InterPro"/>
</dbReference>
<dbReference type="GO" id="GO:0044209">
    <property type="term" value="P:AMP salvage"/>
    <property type="evidence" value="ECO:0007669"/>
    <property type="project" value="UniProtKB-UniRule"/>
</dbReference>
<dbReference type="GO" id="GO:0006166">
    <property type="term" value="P:purine ribonucleoside salvage"/>
    <property type="evidence" value="ECO:0007669"/>
    <property type="project" value="UniProtKB-KW"/>
</dbReference>
<dbReference type="CDD" id="cd06223">
    <property type="entry name" value="PRTases_typeI"/>
    <property type="match status" value="1"/>
</dbReference>
<dbReference type="FunFam" id="3.40.50.2020:FF:000004">
    <property type="entry name" value="Adenine phosphoribosyltransferase"/>
    <property type="match status" value="1"/>
</dbReference>
<dbReference type="Gene3D" id="3.40.50.2020">
    <property type="match status" value="1"/>
</dbReference>
<dbReference type="HAMAP" id="MF_00004">
    <property type="entry name" value="Aden_phosphoribosyltr"/>
    <property type="match status" value="1"/>
</dbReference>
<dbReference type="InterPro" id="IPR005764">
    <property type="entry name" value="Ade_phspho_trans"/>
</dbReference>
<dbReference type="InterPro" id="IPR000836">
    <property type="entry name" value="PRibTrfase_dom"/>
</dbReference>
<dbReference type="InterPro" id="IPR029057">
    <property type="entry name" value="PRTase-like"/>
</dbReference>
<dbReference type="InterPro" id="IPR050054">
    <property type="entry name" value="UPRTase/APRTase"/>
</dbReference>
<dbReference type="NCBIfam" id="TIGR01090">
    <property type="entry name" value="apt"/>
    <property type="match status" value="1"/>
</dbReference>
<dbReference type="NCBIfam" id="NF002632">
    <property type="entry name" value="PRK02304.1-1"/>
    <property type="match status" value="1"/>
</dbReference>
<dbReference type="NCBIfam" id="NF002633">
    <property type="entry name" value="PRK02304.1-2"/>
    <property type="match status" value="1"/>
</dbReference>
<dbReference type="NCBIfam" id="NF002634">
    <property type="entry name" value="PRK02304.1-3"/>
    <property type="match status" value="1"/>
</dbReference>
<dbReference type="NCBIfam" id="NF002636">
    <property type="entry name" value="PRK02304.1-5"/>
    <property type="match status" value="1"/>
</dbReference>
<dbReference type="PANTHER" id="PTHR32315">
    <property type="entry name" value="ADENINE PHOSPHORIBOSYLTRANSFERASE"/>
    <property type="match status" value="1"/>
</dbReference>
<dbReference type="PANTHER" id="PTHR32315:SF3">
    <property type="entry name" value="ADENINE PHOSPHORIBOSYLTRANSFERASE"/>
    <property type="match status" value="1"/>
</dbReference>
<dbReference type="Pfam" id="PF00156">
    <property type="entry name" value="Pribosyltran"/>
    <property type="match status" value="1"/>
</dbReference>
<dbReference type="SUPFAM" id="SSF53271">
    <property type="entry name" value="PRTase-like"/>
    <property type="match status" value="1"/>
</dbReference>
<dbReference type="PROSITE" id="PS00103">
    <property type="entry name" value="PUR_PYR_PR_TRANSFER"/>
    <property type="match status" value="1"/>
</dbReference>
<name>APT_ECOBW</name>
<comment type="function">
    <text evidence="1">Catalyzes a salvage reaction resulting in the formation of AMP, that is energically less costly than de novo synthesis.</text>
</comment>
<comment type="catalytic activity">
    <reaction evidence="1">
        <text>AMP + diphosphate = 5-phospho-alpha-D-ribose 1-diphosphate + adenine</text>
        <dbReference type="Rhea" id="RHEA:16609"/>
        <dbReference type="ChEBI" id="CHEBI:16708"/>
        <dbReference type="ChEBI" id="CHEBI:33019"/>
        <dbReference type="ChEBI" id="CHEBI:58017"/>
        <dbReference type="ChEBI" id="CHEBI:456215"/>
        <dbReference type="EC" id="2.4.2.7"/>
    </reaction>
</comment>
<comment type="pathway">
    <text evidence="1">Purine metabolism; AMP biosynthesis via salvage pathway; AMP from adenine: step 1/1.</text>
</comment>
<comment type="subunit">
    <text evidence="1">Homodimer.</text>
</comment>
<comment type="subcellular location">
    <subcellularLocation>
        <location evidence="1">Cytoplasm</location>
    </subcellularLocation>
</comment>
<comment type="similarity">
    <text evidence="1">Belongs to the purine/pyrimidine phosphoribosyltransferase family.</text>
</comment>
<proteinExistence type="inferred from homology"/>
<gene>
    <name evidence="1" type="primary">apt</name>
    <name type="ordered locus">BWG_0350</name>
</gene>
<organism>
    <name type="scientific">Escherichia coli (strain K12 / MC4100 / BW2952)</name>
    <dbReference type="NCBI Taxonomy" id="595496"/>
    <lineage>
        <taxon>Bacteria</taxon>
        <taxon>Pseudomonadati</taxon>
        <taxon>Pseudomonadota</taxon>
        <taxon>Gammaproteobacteria</taxon>
        <taxon>Enterobacterales</taxon>
        <taxon>Enterobacteriaceae</taxon>
        <taxon>Escherichia</taxon>
    </lineage>
</organism>
<protein>
    <recommendedName>
        <fullName evidence="1">Adenine phosphoribosyltransferase</fullName>
        <shortName evidence="1">APRT</shortName>
        <ecNumber evidence="1">2.4.2.7</ecNumber>
    </recommendedName>
</protein>